<sequence length="458" mass="51335">MKRNFDDFKQFIKCKKIGVVGIGISNKPLIDFLLKLGARVSAFDKKSPDEIGEVARELKEKNVDLVLGEKYLNDLSDFDIIFKTPSMRIDSPAFVKAKEKGAYITSEMEEFIRYCPAKIYGVTGSDGKTTTTTLMYNILKKQGYKSWIGGNIGTPLFSEVEEITPDDRVVIELSSFQLMTMNISPEVAVITNVSPNHLDIHKDMEEYIMAKKNIFKYQSNSDLLVLNKDNELTNSMTGEALGKVRQFSIKEKLNKGGYLNKDSLCIDGDEVCKLSEIKLKGMHNVENLLAAFCALKDDVNIESMREIATTFSGVEHRCEFVREINGVKYYNDSIASSPTRTLAGLKAFEKPVILIAGGYDKKIPFDILAEEGYSKIKTLVLMGATKYKIKEAFENLELKKHVHIPIIMANSLVEAVNSARKVSCRGDVVTLSPACASFDMFANFEIRGNMFKEIVNDM</sequence>
<feature type="chain" id="PRO_1000147401" description="UDP-N-acetylmuramoylalanine--D-glutamate ligase">
    <location>
        <begin position="1"/>
        <end position="458"/>
    </location>
</feature>
<feature type="binding site" evidence="1">
    <location>
        <begin position="124"/>
        <end position="130"/>
    </location>
    <ligand>
        <name>ATP</name>
        <dbReference type="ChEBI" id="CHEBI:30616"/>
    </ligand>
</feature>
<dbReference type="EC" id="6.3.2.9" evidence="1"/>
<dbReference type="EMBL" id="AP009049">
    <property type="protein sequence ID" value="BAH05200.1"/>
    <property type="molecule type" value="Genomic_DNA"/>
</dbReference>
<dbReference type="RefSeq" id="WP_011988770.1">
    <property type="nucleotide sequence ID" value="NC_011837.1"/>
</dbReference>
<dbReference type="SMR" id="B9DY75"/>
<dbReference type="KEGG" id="ckr:CKR_0149"/>
<dbReference type="HOGENOM" id="CLU_032540_0_1_9"/>
<dbReference type="UniPathway" id="UPA00219"/>
<dbReference type="Proteomes" id="UP000007969">
    <property type="component" value="Chromosome"/>
</dbReference>
<dbReference type="GO" id="GO:0005737">
    <property type="term" value="C:cytoplasm"/>
    <property type="evidence" value="ECO:0007669"/>
    <property type="project" value="UniProtKB-SubCell"/>
</dbReference>
<dbReference type="GO" id="GO:0005524">
    <property type="term" value="F:ATP binding"/>
    <property type="evidence" value="ECO:0007669"/>
    <property type="project" value="UniProtKB-UniRule"/>
</dbReference>
<dbReference type="GO" id="GO:0008764">
    <property type="term" value="F:UDP-N-acetylmuramoylalanine-D-glutamate ligase activity"/>
    <property type="evidence" value="ECO:0007669"/>
    <property type="project" value="UniProtKB-UniRule"/>
</dbReference>
<dbReference type="GO" id="GO:0051301">
    <property type="term" value="P:cell division"/>
    <property type="evidence" value="ECO:0007669"/>
    <property type="project" value="UniProtKB-KW"/>
</dbReference>
<dbReference type="GO" id="GO:0071555">
    <property type="term" value="P:cell wall organization"/>
    <property type="evidence" value="ECO:0007669"/>
    <property type="project" value="UniProtKB-KW"/>
</dbReference>
<dbReference type="GO" id="GO:0009252">
    <property type="term" value="P:peptidoglycan biosynthetic process"/>
    <property type="evidence" value="ECO:0007669"/>
    <property type="project" value="UniProtKB-UniRule"/>
</dbReference>
<dbReference type="GO" id="GO:0008360">
    <property type="term" value="P:regulation of cell shape"/>
    <property type="evidence" value="ECO:0007669"/>
    <property type="project" value="UniProtKB-KW"/>
</dbReference>
<dbReference type="Gene3D" id="3.90.190.20">
    <property type="entry name" value="Mur ligase, C-terminal domain"/>
    <property type="match status" value="1"/>
</dbReference>
<dbReference type="Gene3D" id="3.40.1190.10">
    <property type="entry name" value="Mur-like, catalytic domain"/>
    <property type="match status" value="1"/>
</dbReference>
<dbReference type="Gene3D" id="3.40.50.720">
    <property type="entry name" value="NAD(P)-binding Rossmann-like Domain"/>
    <property type="match status" value="1"/>
</dbReference>
<dbReference type="HAMAP" id="MF_00639">
    <property type="entry name" value="MurD"/>
    <property type="match status" value="1"/>
</dbReference>
<dbReference type="InterPro" id="IPR036565">
    <property type="entry name" value="Mur-like_cat_sf"/>
</dbReference>
<dbReference type="InterPro" id="IPR004101">
    <property type="entry name" value="Mur_ligase_C"/>
</dbReference>
<dbReference type="InterPro" id="IPR036615">
    <property type="entry name" value="Mur_ligase_C_dom_sf"/>
</dbReference>
<dbReference type="InterPro" id="IPR013221">
    <property type="entry name" value="Mur_ligase_cen"/>
</dbReference>
<dbReference type="InterPro" id="IPR005762">
    <property type="entry name" value="MurD"/>
</dbReference>
<dbReference type="NCBIfam" id="TIGR01087">
    <property type="entry name" value="murD"/>
    <property type="match status" value="1"/>
</dbReference>
<dbReference type="PANTHER" id="PTHR43692">
    <property type="entry name" value="UDP-N-ACETYLMURAMOYLALANINE--D-GLUTAMATE LIGASE"/>
    <property type="match status" value="1"/>
</dbReference>
<dbReference type="PANTHER" id="PTHR43692:SF1">
    <property type="entry name" value="UDP-N-ACETYLMURAMOYLALANINE--D-GLUTAMATE LIGASE"/>
    <property type="match status" value="1"/>
</dbReference>
<dbReference type="Pfam" id="PF02875">
    <property type="entry name" value="Mur_ligase_C"/>
    <property type="match status" value="1"/>
</dbReference>
<dbReference type="Pfam" id="PF08245">
    <property type="entry name" value="Mur_ligase_M"/>
    <property type="match status" value="1"/>
</dbReference>
<dbReference type="Pfam" id="PF21799">
    <property type="entry name" value="MurD-like_N"/>
    <property type="match status" value="1"/>
</dbReference>
<dbReference type="SUPFAM" id="SSF51984">
    <property type="entry name" value="MurCD N-terminal domain"/>
    <property type="match status" value="1"/>
</dbReference>
<dbReference type="SUPFAM" id="SSF53623">
    <property type="entry name" value="MurD-like peptide ligases, catalytic domain"/>
    <property type="match status" value="1"/>
</dbReference>
<dbReference type="SUPFAM" id="SSF53244">
    <property type="entry name" value="MurD-like peptide ligases, peptide-binding domain"/>
    <property type="match status" value="1"/>
</dbReference>
<protein>
    <recommendedName>
        <fullName evidence="1">UDP-N-acetylmuramoylalanine--D-glutamate ligase</fullName>
        <ecNumber evidence="1">6.3.2.9</ecNumber>
    </recommendedName>
    <alternativeName>
        <fullName evidence="1">D-glutamic acid-adding enzyme</fullName>
    </alternativeName>
    <alternativeName>
        <fullName evidence="1">UDP-N-acetylmuramoyl-L-alanyl-D-glutamate synthetase</fullName>
    </alternativeName>
</protein>
<name>MURD_CLOK1</name>
<evidence type="ECO:0000255" key="1">
    <source>
        <dbReference type="HAMAP-Rule" id="MF_00639"/>
    </source>
</evidence>
<proteinExistence type="inferred from homology"/>
<gene>
    <name evidence="1" type="primary">murD</name>
    <name type="ordered locus">CKR_0149</name>
</gene>
<accession>B9DY75</accession>
<keyword id="KW-0067">ATP-binding</keyword>
<keyword id="KW-0131">Cell cycle</keyword>
<keyword id="KW-0132">Cell division</keyword>
<keyword id="KW-0133">Cell shape</keyword>
<keyword id="KW-0961">Cell wall biogenesis/degradation</keyword>
<keyword id="KW-0963">Cytoplasm</keyword>
<keyword id="KW-0436">Ligase</keyword>
<keyword id="KW-0547">Nucleotide-binding</keyword>
<keyword id="KW-0573">Peptidoglycan synthesis</keyword>
<organism>
    <name type="scientific">Clostridium kluyveri (strain NBRC 12016)</name>
    <dbReference type="NCBI Taxonomy" id="583346"/>
    <lineage>
        <taxon>Bacteria</taxon>
        <taxon>Bacillati</taxon>
        <taxon>Bacillota</taxon>
        <taxon>Clostridia</taxon>
        <taxon>Eubacteriales</taxon>
        <taxon>Clostridiaceae</taxon>
        <taxon>Clostridium</taxon>
    </lineage>
</organism>
<reference key="1">
    <citation type="submission" date="2005-09" db="EMBL/GenBank/DDBJ databases">
        <title>Complete genome sequence of Clostridium kluyveri and comparative genomics of Clostridia species.</title>
        <authorList>
            <person name="Inui M."/>
            <person name="Nonaka H."/>
            <person name="Shinoda Y."/>
            <person name="Ikenaga Y."/>
            <person name="Abe M."/>
            <person name="Naito K."/>
            <person name="Vertes A.A."/>
            <person name="Yukawa H."/>
        </authorList>
    </citation>
    <scope>NUCLEOTIDE SEQUENCE [LARGE SCALE GENOMIC DNA]</scope>
    <source>
        <strain>NBRC 12016</strain>
    </source>
</reference>
<comment type="function">
    <text evidence="1">Cell wall formation. Catalyzes the addition of glutamate to the nucleotide precursor UDP-N-acetylmuramoyl-L-alanine (UMA).</text>
</comment>
<comment type="catalytic activity">
    <reaction evidence="1">
        <text>UDP-N-acetyl-alpha-D-muramoyl-L-alanine + D-glutamate + ATP = UDP-N-acetyl-alpha-D-muramoyl-L-alanyl-D-glutamate + ADP + phosphate + H(+)</text>
        <dbReference type="Rhea" id="RHEA:16429"/>
        <dbReference type="ChEBI" id="CHEBI:15378"/>
        <dbReference type="ChEBI" id="CHEBI:29986"/>
        <dbReference type="ChEBI" id="CHEBI:30616"/>
        <dbReference type="ChEBI" id="CHEBI:43474"/>
        <dbReference type="ChEBI" id="CHEBI:83898"/>
        <dbReference type="ChEBI" id="CHEBI:83900"/>
        <dbReference type="ChEBI" id="CHEBI:456216"/>
        <dbReference type="EC" id="6.3.2.9"/>
    </reaction>
</comment>
<comment type="pathway">
    <text evidence="1">Cell wall biogenesis; peptidoglycan biosynthesis.</text>
</comment>
<comment type="subcellular location">
    <subcellularLocation>
        <location evidence="1">Cytoplasm</location>
    </subcellularLocation>
</comment>
<comment type="similarity">
    <text evidence="1">Belongs to the MurCDEF family.</text>
</comment>